<organism>
    <name type="scientific">Neurospora crassa (strain ATCC 24698 / 74-OR23-1A / CBS 708.71 / DSM 1257 / FGSC 987)</name>
    <dbReference type="NCBI Taxonomy" id="367110"/>
    <lineage>
        <taxon>Eukaryota</taxon>
        <taxon>Fungi</taxon>
        <taxon>Dikarya</taxon>
        <taxon>Ascomycota</taxon>
        <taxon>Pezizomycotina</taxon>
        <taxon>Sordariomycetes</taxon>
        <taxon>Sordariomycetidae</taxon>
        <taxon>Sordariales</taxon>
        <taxon>Sordariaceae</taxon>
        <taxon>Neurospora</taxon>
    </lineage>
</organism>
<gene>
    <name type="primary">nuc-2</name>
    <name type="ORF">B23G1.010</name>
    <name type="ORF">NCU01847</name>
    <name type="ORF">NCU11426</name>
</gene>
<proteinExistence type="predicted"/>
<comment type="function">
    <text>Controls phosphorus acquisition.</text>
</comment>
<comment type="sequence caution" evidence="3">
    <conflict type="erroneous gene model prediction">
        <sequence resource="EMBL-CDS" id="EDO64869"/>
    </conflict>
</comment>
<name>NUC2_NEUCR</name>
<sequence length="1066" mass="117115">MKFGKQIQKRQLEVPEYAASFVNYKALKKLIKKLSATPILPPQTDLRRAPGEPLDTQSALQANKATFFFQIDRELDKVNACYVQKEAELKIRLKTLLDKKKALRSRSGGTSRRSTKFTTLQEGFQQFVNDLNKLQQFVEINGTAFSKILKKWDKTAKSKTKELYLSRVVEKRPAFNPTVISELSDQATTSLQELGAWADGDNVSFETRPDHDHVVSTQHLLGTDEGDADTLLLDTVLSGNIDSLKDMLDRMKATAAPDGSADVSLAERVTRTFLASINEGSLEALKVLLDTGLVDIQSWDDINERNCLHQAAIYGNSFVLEYGLSKGVDAERTDAYGRVPLHYASMHGRLDMIDALLNASPKTINLIDHDNFTPLVHSIVRNHLECVGRLLERSARIDPVSDTDHVPLNLACQHGSVAIVELLLKHGAKILADAEGLYPQHLVARSGQTPEILVLLKQYGADLDQIDKLYGWTPLVHAASEGNVPCLQALLETGADPNILDEKDLPAMYYAAWEGHLECMKLLTPAKKEKAASELPPIHIGGALPPMASSTAPMPMSLDAIDPIPALELPPPIIPLRRYGHNFLDTKTVVQISFEEDSEQPLLFFQDGKYPAARLTISSKSSDLIPKNIILPFQEDTRVASFQIDNLESFTLDFEVFPTYGAKVIAKTVALPNIFRALLSSSGKCCLPLFDPRLRAIGQISFHVQIIKPFSGTPLEITDFETYWKATSQFDTNTSTFVTGSSLSGDFVQIYVQHTKDGVPVLWPRWTINCGGIDVPVSTLTLAQFQTVTAAARNRINLSELSTYTLDQIADVHRILANIGITLHEALFLLPKGMHVNIQVLYPTADEKAEAKSSTAADDVNEFADAILSVVFDHARAQRAERPDSVRSVVFSSYNPTLCTALNWKQPNFPVFLCNDMGREDRKQQQQGSCSKGDGDEDMGGTTAASRREAADERTLQSDGRRTSSIKDVVRTATSNNLMGLICCSRLLDMVPALVDAIKSHGLALVVDKSGEPEAANSKDSGDKQLGISGALGGLAGSDPFPKLPKGVDGLLKSNGVLRFNEYIDV</sequence>
<protein>
    <recommendedName>
        <fullName>Ankyrin repeat protein nuc-2</fullName>
    </recommendedName>
    <alternativeName>
        <fullName>Nuclease 2</fullName>
    </alternativeName>
</protein>
<feature type="chain" id="PRO_0000067064" description="Ankyrin repeat protein nuc-2">
    <location>
        <begin position="1"/>
        <end position="1066"/>
    </location>
</feature>
<feature type="domain" description="SPX" evidence="1">
    <location>
        <begin position="1"/>
        <end position="166"/>
    </location>
</feature>
<feature type="repeat" description="ANK 1">
    <location>
        <begin position="268"/>
        <end position="298"/>
    </location>
</feature>
<feature type="repeat" description="ANK 2">
    <location>
        <begin position="336"/>
        <end position="366"/>
    </location>
</feature>
<feature type="repeat" description="ANK 3">
    <location>
        <begin position="370"/>
        <end position="399"/>
    </location>
</feature>
<feature type="repeat" description="ANK 4">
    <location>
        <begin position="403"/>
        <end position="432"/>
    </location>
</feature>
<feature type="repeat" description="ANK 5">
    <location>
        <begin position="435"/>
        <end position="465"/>
    </location>
</feature>
<feature type="repeat" description="ANK 6">
    <location>
        <begin position="470"/>
        <end position="499"/>
    </location>
</feature>
<feature type="repeat" description="ANK 7">
    <location>
        <begin position="503"/>
        <end position="532"/>
    </location>
</feature>
<feature type="domain" description="GP-PDE">
    <location>
        <begin position="717"/>
        <end position="1048"/>
    </location>
</feature>
<feature type="region of interest" description="Disordered" evidence="2">
    <location>
        <begin position="923"/>
        <end position="963"/>
    </location>
</feature>
<feature type="compositionally biased region" description="Basic and acidic residues" evidence="2">
    <location>
        <begin position="946"/>
        <end position="962"/>
    </location>
</feature>
<feature type="sequence conflict" description="In Ref. 1; AAB03277." evidence="3" ref="1">
    <original>A</original>
    <variation>V</variation>
    <location>
        <position position="857"/>
    </location>
</feature>
<reference key="1">
    <citation type="journal article" date="1996" name="Mol. Gen. Genet.">
        <title>NUC-2, a component of the phosphate-regulated signal transduction pathway in Neurospora crassa, is an ankyrin repeat protein.</title>
        <authorList>
            <person name="Poleg Y."/>
            <person name="Aramayo R."/>
            <person name="Kang S."/>
            <person name="Hall J.G."/>
            <person name="Metzenberg R.L."/>
        </authorList>
    </citation>
    <scope>NUCLEOTIDE SEQUENCE [GENOMIC DNA]</scope>
    <source>
        <strain>74-OR23-1VA / FGSC 2489</strain>
    </source>
</reference>
<reference key="2">
    <citation type="journal article" date="2003" name="Nucleic Acids Res.">
        <title>What's in the genome of a filamentous fungus? Analysis of the Neurospora genome sequence.</title>
        <authorList>
            <person name="Mannhaupt G."/>
            <person name="Montrone C."/>
            <person name="Haase D."/>
            <person name="Mewes H.-W."/>
            <person name="Aign V."/>
            <person name="Hoheisel J.D."/>
            <person name="Fartmann B."/>
            <person name="Nyakatura G."/>
            <person name="Kempken F."/>
            <person name="Maier J."/>
            <person name="Schulte U."/>
        </authorList>
    </citation>
    <scope>NUCLEOTIDE SEQUENCE [LARGE SCALE GENOMIC DNA]</scope>
    <source>
        <strain>ATCC 24698 / 74-OR23-1A / CBS 708.71 / DSM 1257 / FGSC 987</strain>
    </source>
</reference>
<reference key="3">
    <citation type="journal article" date="2003" name="Nature">
        <title>The genome sequence of the filamentous fungus Neurospora crassa.</title>
        <authorList>
            <person name="Galagan J.E."/>
            <person name="Calvo S.E."/>
            <person name="Borkovich K.A."/>
            <person name="Selker E.U."/>
            <person name="Read N.D."/>
            <person name="Jaffe D.B."/>
            <person name="FitzHugh W."/>
            <person name="Ma L.-J."/>
            <person name="Smirnov S."/>
            <person name="Purcell S."/>
            <person name="Rehman B."/>
            <person name="Elkins T."/>
            <person name="Engels R."/>
            <person name="Wang S."/>
            <person name="Nielsen C.B."/>
            <person name="Butler J."/>
            <person name="Endrizzi M."/>
            <person name="Qui D."/>
            <person name="Ianakiev P."/>
            <person name="Bell-Pedersen D."/>
            <person name="Nelson M.A."/>
            <person name="Werner-Washburne M."/>
            <person name="Selitrennikoff C.P."/>
            <person name="Kinsey J.A."/>
            <person name="Braun E.L."/>
            <person name="Zelter A."/>
            <person name="Schulte U."/>
            <person name="Kothe G.O."/>
            <person name="Jedd G."/>
            <person name="Mewes H.-W."/>
            <person name="Staben C."/>
            <person name="Marcotte E."/>
            <person name="Greenberg D."/>
            <person name="Roy A."/>
            <person name="Foley K."/>
            <person name="Naylor J."/>
            <person name="Stange-Thomann N."/>
            <person name="Barrett R."/>
            <person name="Gnerre S."/>
            <person name="Kamal M."/>
            <person name="Kamvysselis M."/>
            <person name="Mauceli E.W."/>
            <person name="Bielke C."/>
            <person name="Rudd S."/>
            <person name="Frishman D."/>
            <person name="Krystofova S."/>
            <person name="Rasmussen C."/>
            <person name="Metzenberg R.L."/>
            <person name="Perkins D.D."/>
            <person name="Kroken S."/>
            <person name="Cogoni C."/>
            <person name="Macino G."/>
            <person name="Catcheside D.E.A."/>
            <person name="Li W."/>
            <person name="Pratt R.J."/>
            <person name="Osmani S.A."/>
            <person name="DeSouza C.P.C."/>
            <person name="Glass N.L."/>
            <person name="Orbach M.J."/>
            <person name="Berglund J.A."/>
            <person name="Voelker R."/>
            <person name="Yarden O."/>
            <person name="Plamann M."/>
            <person name="Seiler S."/>
            <person name="Dunlap J.C."/>
            <person name="Radford A."/>
            <person name="Aramayo R."/>
            <person name="Natvig D.O."/>
            <person name="Alex L.A."/>
            <person name="Mannhaupt G."/>
            <person name="Ebbole D.J."/>
            <person name="Freitag M."/>
            <person name="Paulsen I."/>
            <person name="Sachs M.S."/>
            <person name="Lander E.S."/>
            <person name="Nusbaum C."/>
            <person name="Birren B.W."/>
        </authorList>
    </citation>
    <scope>NUCLEOTIDE SEQUENCE [LARGE SCALE GENOMIC DNA]</scope>
    <source>
        <strain>ATCC 24698 / 74-OR23-1A / CBS 708.71 / DSM 1257 / FGSC 987</strain>
    </source>
</reference>
<accession>Q01317</accession>
<accession>A7UXH8</accession>
<accession>Q7RW36</accession>
<dbReference type="EMBL" id="U51118">
    <property type="protein sequence ID" value="AAB03277.1"/>
    <property type="molecule type" value="Genomic_DNA"/>
</dbReference>
<dbReference type="EMBL" id="BX284754">
    <property type="protein sequence ID" value="CAD70463.1"/>
    <property type="molecule type" value="Genomic_DNA"/>
</dbReference>
<dbReference type="EMBL" id="CM002237">
    <property type="protein sequence ID" value="EDO64869.2"/>
    <property type="status" value="ALT_SEQ"/>
    <property type="molecule type" value="Genomic_DNA"/>
</dbReference>
<dbReference type="PIR" id="S72479">
    <property type="entry name" value="S72479"/>
</dbReference>
<dbReference type="RefSeq" id="XP_001727960.2">
    <property type="nucleotide sequence ID" value="XM_001727908.2"/>
</dbReference>
<dbReference type="SMR" id="Q01317"/>
<dbReference type="FunCoup" id="Q01317">
    <property type="interactions" value="159"/>
</dbReference>
<dbReference type="STRING" id="367110.Q01317"/>
<dbReference type="PaxDb" id="5141-EFNCRP00000009831"/>
<dbReference type="EnsemblFungi" id="EDO64869">
    <property type="protein sequence ID" value="EDO64869"/>
    <property type="gene ID" value="NCU11426"/>
</dbReference>
<dbReference type="GeneID" id="5846981"/>
<dbReference type="KEGG" id="ncr:NCU11426"/>
<dbReference type="HOGENOM" id="CLU_002842_1_0_1"/>
<dbReference type="InParanoid" id="Q01317"/>
<dbReference type="OrthoDB" id="1577640at2759"/>
<dbReference type="Proteomes" id="UP000001805">
    <property type="component" value="Chromosome 6, Linkage Group II"/>
</dbReference>
<dbReference type="GO" id="GO:0004190">
    <property type="term" value="F:aspartic-type endopeptidase activity"/>
    <property type="evidence" value="ECO:0007669"/>
    <property type="project" value="InterPro"/>
</dbReference>
<dbReference type="GO" id="GO:0008081">
    <property type="term" value="F:phosphoric diester hydrolase activity"/>
    <property type="evidence" value="ECO:0007669"/>
    <property type="project" value="InterPro"/>
</dbReference>
<dbReference type="GO" id="GO:0006629">
    <property type="term" value="P:lipid metabolic process"/>
    <property type="evidence" value="ECO:0007669"/>
    <property type="project" value="InterPro"/>
</dbReference>
<dbReference type="GO" id="GO:0006508">
    <property type="term" value="P:proteolysis"/>
    <property type="evidence" value="ECO:0007669"/>
    <property type="project" value="InterPro"/>
</dbReference>
<dbReference type="CDD" id="cd08578">
    <property type="entry name" value="GDPD_NUC-2_fungi"/>
    <property type="match status" value="1"/>
</dbReference>
<dbReference type="CDD" id="cd14483">
    <property type="entry name" value="SPX_PHO81_NUC-2_like"/>
    <property type="match status" value="1"/>
</dbReference>
<dbReference type="Gene3D" id="1.25.40.20">
    <property type="entry name" value="Ankyrin repeat-containing domain"/>
    <property type="match status" value="1"/>
</dbReference>
<dbReference type="Gene3D" id="3.20.20.190">
    <property type="entry name" value="Phosphatidylinositol (PI) phosphodiesterase"/>
    <property type="match status" value="1"/>
</dbReference>
<dbReference type="InterPro" id="IPR002110">
    <property type="entry name" value="Ankyrin_rpt"/>
</dbReference>
<dbReference type="InterPro" id="IPR036770">
    <property type="entry name" value="Ankyrin_rpt-contain_sf"/>
</dbReference>
<dbReference type="InterPro" id="IPR030395">
    <property type="entry name" value="GP_PDE_dom"/>
</dbReference>
<dbReference type="InterPro" id="IPR001995">
    <property type="entry name" value="Peptidase_A2_cat"/>
</dbReference>
<dbReference type="InterPro" id="IPR017946">
    <property type="entry name" value="PLC-like_Pdiesterase_TIM-brl"/>
</dbReference>
<dbReference type="InterPro" id="IPR004331">
    <property type="entry name" value="SPX_dom"/>
</dbReference>
<dbReference type="PANTHER" id="PTHR24198">
    <property type="entry name" value="ANKYRIN REPEAT AND PROTEIN KINASE DOMAIN-CONTAINING PROTEIN"/>
    <property type="match status" value="1"/>
</dbReference>
<dbReference type="PANTHER" id="PTHR24198:SF165">
    <property type="entry name" value="ANKYRIN REPEAT-CONTAINING PROTEIN-RELATED"/>
    <property type="match status" value="1"/>
</dbReference>
<dbReference type="Pfam" id="PF12796">
    <property type="entry name" value="Ank_2"/>
    <property type="match status" value="3"/>
</dbReference>
<dbReference type="Pfam" id="PF25329">
    <property type="entry name" value="C2_GDE1"/>
    <property type="match status" value="1"/>
</dbReference>
<dbReference type="Pfam" id="PF03009">
    <property type="entry name" value="GDPD"/>
    <property type="match status" value="1"/>
</dbReference>
<dbReference type="Pfam" id="PF03105">
    <property type="entry name" value="SPX"/>
    <property type="match status" value="2"/>
</dbReference>
<dbReference type="PRINTS" id="PR01415">
    <property type="entry name" value="ANKYRIN"/>
</dbReference>
<dbReference type="SMART" id="SM00248">
    <property type="entry name" value="ANK"/>
    <property type="match status" value="9"/>
</dbReference>
<dbReference type="SUPFAM" id="SSF48403">
    <property type="entry name" value="Ankyrin repeat"/>
    <property type="match status" value="1"/>
</dbReference>
<dbReference type="SUPFAM" id="SSF51695">
    <property type="entry name" value="PLC-like phosphodiesterases"/>
    <property type="match status" value="1"/>
</dbReference>
<dbReference type="PROSITE" id="PS50297">
    <property type="entry name" value="ANK_REP_REGION"/>
    <property type="match status" value="1"/>
</dbReference>
<dbReference type="PROSITE" id="PS50088">
    <property type="entry name" value="ANK_REPEAT"/>
    <property type="match status" value="4"/>
</dbReference>
<dbReference type="PROSITE" id="PS51704">
    <property type="entry name" value="GP_PDE"/>
    <property type="match status" value="1"/>
</dbReference>
<dbReference type="PROSITE" id="PS51382">
    <property type="entry name" value="SPX"/>
    <property type="match status" value="1"/>
</dbReference>
<evidence type="ECO:0000255" key="1">
    <source>
        <dbReference type="PROSITE-ProRule" id="PRU00714"/>
    </source>
</evidence>
<evidence type="ECO:0000256" key="2">
    <source>
        <dbReference type="SAM" id="MobiDB-lite"/>
    </source>
</evidence>
<evidence type="ECO:0000305" key="3"/>
<keyword id="KW-0040">ANK repeat</keyword>
<keyword id="KW-1185">Reference proteome</keyword>
<keyword id="KW-0677">Repeat</keyword>